<keyword id="KW-0120">Carbon dioxide fixation</keyword>
<keyword id="KW-0456">Lyase</keyword>
<keyword id="KW-0460">Magnesium</keyword>
<keyword id="KW-1185">Reference proteome</keyword>
<name>CAPP_ERWT9</name>
<accession>B2VGA2</accession>
<evidence type="ECO:0000255" key="1">
    <source>
        <dbReference type="HAMAP-Rule" id="MF_00595"/>
    </source>
</evidence>
<proteinExistence type="inferred from homology"/>
<comment type="function">
    <text evidence="1">Forms oxaloacetate, a four-carbon dicarboxylic acid source for the tricarboxylic acid cycle.</text>
</comment>
<comment type="catalytic activity">
    <reaction evidence="1">
        <text>oxaloacetate + phosphate = phosphoenolpyruvate + hydrogencarbonate</text>
        <dbReference type="Rhea" id="RHEA:28370"/>
        <dbReference type="ChEBI" id="CHEBI:16452"/>
        <dbReference type="ChEBI" id="CHEBI:17544"/>
        <dbReference type="ChEBI" id="CHEBI:43474"/>
        <dbReference type="ChEBI" id="CHEBI:58702"/>
        <dbReference type="EC" id="4.1.1.31"/>
    </reaction>
</comment>
<comment type="cofactor">
    <cofactor evidence="1">
        <name>Mg(2+)</name>
        <dbReference type="ChEBI" id="CHEBI:18420"/>
    </cofactor>
</comment>
<comment type="similarity">
    <text evidence="1">Belongs to the PEPCase type 1 family.</text>
</comment>
<dbReference type="EC" id="4.1.1.31" evidence="1"/>
<dbReference type="EMBL" id="CU468135">
    <property type="protein sequence ID" value="CAO95179.1"/>
    <property type="molecule type" value="Genomic_DNA"/>
</dbReference>
<dbReference type="RefSeq" id="WP_012439903.1">
    <property type="nucleotide sequence ID" value="NC_010694.1"/>
</dbReference>
<dbReference type="SMR" id="B2VGA2"/>
<dbReference type="STRING" id="465817.ETA_01330"/>
<dbReference type="KEGG" id="eta:ETA_01330"/>
<dbReference type="eggNOG" id="COG2352">
    <property type="taxonomic scope" value="Bacteria"/>
</dbReference>
<dbReference type="HOGENOM" id="CLU_006557_2_0_6"/>
<dbReference type="OrthoDB" id="9768133at2"/>
<dbReference type="Proteomes" id="UP000001726">
    <property type="component" value="Chromosome"/>
</dbReference>
<dbReference type="GO" id="GO:0005829">
    <property type="term" value="C:cytosol"/>
    <property type="evidence" value="ECO:0007669"/>
    <property type="project" value="TreeGrafter"/>
</dbReference>
<dbReference type="GO" id="GO:0000287">
    <property type="term" value="F:magnesium ion binding"/>
    <property type="evidence" value="ECO:0007669"/>
    <property type="project" value="UniProtKB-UniRule"/>
</dbReference>
<dbReference type="GO" id="GO:0008964">
    <property type="term" value="F:phosphoenolpyruvate carboxylase activity"/>
    <property type="evidence" value="ECO:0007669"/>
    <property type="project" value="UniProtKB-UniRule"/>
</dbReference>
<dbReference type="GO" id="GO:0015977">
    <property type="term" value="P:carbon fixation"/>
    <property type="evidence" value="ECO:0007669"/>
    <property type="project" value="UniProtKB-UniRule"/>
</dbReference>
<dbReference type="GO" id="GO:0006107">
    <property type="term" value="P:oxaloacetate metabolic process"/>
    <property type="evidence" value="ECO:0007669"/>
    <property type="project" value="UniProtKB-UniRule"/>
</dbReference>
<dbReference type="GO" id="GO:0006099">
    <property type="term" value="P:tricarboxylic acid cycle"/>
    <property type="evidence" value="ECO:0007669"/>
    <property type="project" value="InterPro"/>
</dbReference>
<dbReference type="FunFam" id="1.20.1440.90:FF:000002">
    <property type="entry name" value="Phosphoenolpyruvate carboxylase"/>
    <property type="match status" value="1"/>
</dbReference>
<dbReference type="Gene3D" id="1.20.1440.90">
    <property type="entry name" value="Phosphoenolpyruvate/pyruvate domain"/>
    <property type="match status" value="1"/>
</dbReference>
<dbReference type="HAMAP" id="MF_00595">
    <property type="entry name" value="PEPcase_type1"/>
    <property type="match status" value="1"/>
</dbReference>
<dbReference type="InterPro" id="IPR021135">
    <property type="entry name" value="PEP_COase"/>
</dbReference>
<dbReference type="InterPro" id="IPR022805">
    <property type="entry name" value="PEP_COase_bac/pln-type"/>
</dbReference>
<dbReference type="InterPro" id="IPR018129">
    <property type="entry name" value="PEP_COase_Lys_AS"/>
</dbReference>
<dbReference type="InterPro" id="IPR033129">
    <property type="entry name" value="PEPCASE_His_AS"/>
</dbReference>
<dbReference type="InterPro" id="IPR015813">
    <property type="entry name" value="Pyrv/PenolPyrv_kinase-like_dom"/>
</dbReference>
<dbReference type="NCBIfam" id="NF000584">
    <property type="entry name" value="PRK00009.1"/>
    <property type="match status" value="1"/>
</dbReference>
<dbReference type="PANTHER" id="PTHR30523">
    <property type="entry name" value="PHOSPHOENOLPYRUVATE CARBOXYLASE"/>
    <property type="match status" value="1"/>
</dbReference>
<dbReference type="PANTHER" id="PTHR30523:SF6">
    <property type="entry name" value="PHOSPHOENOLPYRUVATE CARBOXYLASE"/>
    <property type="match status" value="1"/>
</dbReference>
<dbReference type="Pfam" id="PF00311">
    <property type="entry name" value="PEPcase"/>
    <property type="match status" value="1"/>
</dbReference>
<dbReference type="PRINTS" id="PR00150">
    <property type="entry name" value="PEPCARBXLASE"/>
</dbReference>
<dbReference type="SUPFAM" id="SSF51621">
    <property type="entry name" value="Phosphoenolpyruvate/pyruvate domain"/>
    <property type="match status" value="1"/>
</dbReference>
<dbReference type="PROSITE" id="PS00781">
    <property type="entry name" value="PEPCASE_1"/>
    <property type="match status" value="1"/>
</dbReference>
<dbReference type="PROSITE" id="PS00393">
    <property type="entry name" value="PEPCASE_2"/>
    <property type="match status" value="1"/>
</dbReference>
<organism>
    <name type="scientific">Erwinia tasmaniensis (strain DSM 17950 / CFBP 7177 / CIP 109463 / NCPPB 4357 / Et1/99)</name>
    <dbReference type="NCBI Taxonomy" id="465817"/>
    <lineage>
        <taxon>Bacteria</taxon>
        <taxon>Pseudomonadati</taxon>
        <taxon>Pseudomonadota</taxon>
        <taxon>Gammaproteobacteria</taxon>
        <taxon>Enterobacterales</taxon>
        <taxon>Erwiniaceae</taxon>
        <taxon>Erwinia</taxon>
    </lineage>
</organism>
<feature type="chain" id="PRO_1000129833" description="Phosphoenolpyruvate carboxylase">
    <location>
        <begin position="1"/>
        <end position="883"/>
    </location>
</feature>
<feature type="active site" evidence="1">
    <location>
        <position position="138"/>
    </location>
</feature>
<feature type="active site" evidence="1">
    <location>
        <position position="546"/>
    </location>
</feature>
<protein>
    <recommendedName>
        <fullName evidence="1">Phosphoenolpyruvate carboxylase</fullName>
        <shortName evidence="1">PEPC</shortName>
        <shortName evidence="1">PEPCase</shortName>
        <ecNumber evidence="1">4.1.1.31</ecNumber>
    </recommendedName>
</protein>
<gene>
    <name evidence="1" type="primary">ppc</name>
    <name type="ordered locus">ETA_01330</name>
</gene>
<sequence length="883" mass="98644">MNEQYSAMRSNVSMLGKLLGDTIKDALGENILDRVETIRKLSKSSRAGNDAHRQELLSTLQNLSNDELLPVARAFSQFLNLTNVAEQYHTISPNGEGAKNPELLLQTFQRLKQQPNLTEAAVCEALGSLSLELVLTAHPTEITRRTLIHKLVEVNSCLKQLDHNDLSDYEHAQIMRRLRQLVAQAWHTDEIRKYRPSPVDEAKWGFAVVENSLWEGVPQFLRELNEQVEAAFGYTLPVDFVPVQFTSWMGGDRDGNPNVTADITRHVLQLSRWKATDLFLRDIAVLISELSMSECTPEVRELCGNPEALEPYREIMKNLRSQLMSTQAYLAGRLKGERLTRPANLLIANEQLWEPLYTCYQSLQACGMGIIANGQLLDTLRRVKCFGVPLVRIDIRQESTRHTEAIAEITRYLGLGDYESWSEADKQAFLIRELNSKRPLTPRQWEPSADTKEVLDTCRVAAEAPKGSIAAYVISMAKTPSDVLAVHLLLKEAGIDYAMPVAPLFETLDDLNNANGVMSQLLNIDWYRGLIQGKQMVMIGYSDSAKDAGVMAASWAQYQAQDALIKTCEKAGITLTLFHGRGGSIGRGGAPAHAALLSQPPGSLKGGLRVTEQGEMIRFKYGLPEVTISSLSLYTGAILEANLLPPPEPKTEWIGIMERLSAVSCKMYRGYVREHAEFVPYFRSATPEQELAKLPLGSRPAKRRPTGGVESLRAIPWIFAWTQNRLMLPAWLGAGAALQQVMEDGHQDQLEAMCRDWPFFSTRLGMLEMVFSKADLWLAEYYDQRLVDKSLWPLGKQLRDQLESDIKAVLTIANDAHLMADQPWIAESIALRNVYTDPLNVLQAELLHRSRQQEKAGGEPDARVEQALMVTIAGVAAGMRNTG</sequence>
<reference key="1">
    <citation type="journal article" date="2008" name="Environ. Microbiol.">
        <title>The genome of Erwinia tasmaniensis strain Et1/99, a non-pathogenic bacterium in the genus Erwinia.</title>
        <authorList>
            <person name="Kube M."/>
            <person name="Migdoll A.M."/>
            <person name="Mueller I."/>
            <person name="Kuhl H."/>
            <person name="Beck A."/>
            <person name="Reinhardt R."/>
            <person name="Geider K."/>
        </authorList>
    </citation>
    <scope>NUCLEOTIDE SEQUENCE [LARGE SCALE GENOMIC DNA]</scope>
    <source>
        <strain>DSM 17950 / CFBP 7177 / CIP 109463 / NCPPB 4357 / Et1/99</strain>
    </source>
</reference>